<evidence type="ECO:0000269" key="1">
    <source>
    </source>
</evidence>
<evidence type="ECO:0000269" key="2">
    <source>
    </source>
</evidence>
<evidence type="ECO:0000303" key="3">
    <source>
    </source>
</evidence>
<evidence type="ECO:0000305" key="4"/>
<evidence type="ECO:0000312" key="5">
    <source>
        <dbReference type="EMBL" id="AAP42161.1"/>
    </source>
</evidence>
<evidence type="ECO:0000312" key="6">
    <source>
        <dbReference type="EMBL" id="AAP42171.1"/>
    </source>
</evidence>
<evidence type="ECO:0000312" key="7">
    <source>
        <dbReference type="EMBL" id="CAA55303.1"/>
    </source>
</evidence>
<keyword id="KW-0972">Capsule biogenesis/degradation</keyword>
<keyword id="KW-0521">NADP</keyword>
<keyword id="KW-0548">Nucleotidyltransferase</keyword>
<keyword id="KW-0560">Oxidoreductase</keyword>
<keyword id="KW-0808">Transferase</keyword>
<proteinExistence type="evidence at protein level"/>
<organism evidence="7">
    <name type="scientific">Haemophilus influenzae</name>
    <dbReference type="NCBI Taxonomy" id="727"/>
    <lineage>
        <taxon>Bacteria</taxon>
        <taxon>Pseudomonadati</taxon>
        <taxon>Pseudomonadota</taxon>
        <taxon>Gammaproteobacteria</taxon>
        <taxon>Pasteurellales</taxon>
        <taxon>Pasteurellaceae</taxon>
        <taxon>Haemophilus</taxon>
    </lineage>
</organism>
<sequence>MNKNKNIGIILAGGVGSRMGLGYPKQFSKIAGKTALEHTLAIFQEHKEIDEIIIVSERTSYRRIEDIVSKLDFSKVNRIIFGGKERSDSTLSAITALQDEPENTKLIIHDAVRPLLATEIISECIAKLDKYNAVDVAIPAVDTIVHVNNDTQEIIKIPKRAEYYQGQTPQAFKLGTLKKAYDIYTQGGIEGTCDCSIVLKTLPEERVGIVSGSETNIKLTRPVDLFIADKLFQSRSHFSLRNITSIDRLYDMKDQVLVVIGGSYGIGAHIIDIAKKFGIKTYSLSRSNGVDVGDVKSIEKAFAEIYAKEHKIDHIVNTAAVLNHKTLVSMSYEEILTSINVNYTGMINAVITAYPYLKQTHGSFLGFTSSSYTRGRPFYAIYSSAKAAVVNLTQAISEEWLPDNIKINCVNPERTKTPMRTKAFGIEPEGTLLDAKTVAFASLVVLASRETGNIIDVVLKDEEYITNILADLYK</sequence>
<gene>
    <name evidence="5" type="primary">bcs1</name>
</gene>
<accession>Q48230</accession>
<name>BCS1_HAEIF</name>
<comment type="function">
    <text evidence="1 2">Catalyzes the NADPH-dependent reduction of D-ribulose 5-phosphate to D-ribitol 5-phosphate and the further reaction of D-ribitol 5-phosphate with CTP to form CDP-ribitol.</text>
</comment>
<comment type="catalytic activity">
    <reaction evidence="1 2">
        <text>D-ribitol 5-phosphate + CTP + H(+) = CDP-L-ribitol + diphosphate</text>
        <dbReference type="Rhea" id="RHEA:12456"/>
        <dbReference type="ChEBI" id="CHEBI:15378"/>
        <dbReference type="ChEBI" id="CHEBI:33019"/>
        <dbReference type="ChEBI" id="CHEBI:37563"/>
        <dbReference type="ChEBI" id="CHEBI:57608"/>
        <dbReference type="ChEBI" id="CHEBI:57695"/>
        <dbReference type="EC" id="2.7.7.40"/>
    </reaction>
</comment>
<comment type="catalytic activity">
    <reaction evidence="1 2">
        <text>D-ribitol 5-phosphate + NADP(+) = D-ribulose 5-phosphate + NADPH + H(+)</text>
        <dbReference type="Rhea" id="RHEA:19921"/>
        <dbReference type="ChEBI" id="CHEBI:15378"/>
        <dbReference type="ChEBI" id="CHEBI:57695"/>
        <dbReference type="ChEBI" id="CHEBI:57783"/>
        <dbReference type="ChEBI" id="CHEBI:58121"/>
        <dbReference type="ChEBI" id="CHEBI:58349"/>
        <dbReference type="EC" id="1.1.1.405"/>
    </reaction>
</comment>
<comment type="biophysicochemical properties">
    <kinetics>
        <KM evidence="1">42 uM for D-ribulose 5-phosphate</KM>
        <KM evidence="2">106 uM for D-ribulose 5-phosphate</KM>
        <KM evidence="1">25 uM for NADPH</KM>
        <KM evidence="2">7.06 uM for NADPH</KM>
        <KM evidence="1">75 uM for D-ribitol 5-phosphate (for the cytidylyltransferase reaction)</KM>
        <KM evidence="2">14.7 uM for D-ribitol 5-phosphate (for the cytidylyltransferase reaction)</KM>
        <KM evidence="1">74 uM for CTP</KM>
        <KM evidence="2">8.51 uM for CTP</KM>
        <text evidence="1">kcat is 22 sec(-1) for the reductase reaction. kcat is 13 sec(-1) for the cytidyltransferase reaction.</text>
    </kinetics>
</comment>
<comment type="pathway">
    <text evidence="4">Capsule biogenesis; capsule polysaccharide biosynthesis.</text>
</comment>
<comment type="subunit">
    <text evidence="1 2">Monomer.</text>
</comment>
<comment type="similarity">
    <text evidence="4">In the N-terminal section; belongs to the IspD/TarI cytidylyltransferase family.</text>
</comment>
<comment type="similarity">
    <text evidence="4">In the C-terminal section; belongs to the short-chain dehydrogenases/reductases (SDR) family.</text>
</comment>
<dbReference type="EC" id="2.7.7.40" evidence="1 2"/>
<dbReference type="EC" id="1.1.1.405" evidence="1 2"/>
<dbReference type="EMBL" id="AF549210">
    <property type="protein sequence ID" value="AAP42161.1"/>
    <property type="molecule type" value="Genomic_DNA"/>
</dbReference>
<dbReference type="EMBL" id="AF549212">
    <property type="protein sequence ID" value="AAP42171.1"/>
    <property type="molecule type" value="Genomic_DNA"/>
</dbReference>
<dbReference type="EMBL" id="X78559">
    <property type="protein sequence ID" value="CAA55303.1"/>
    <property type="molecule type" value="Genomic_DNA"/>
</dbReference>
<dbReference type="PIR" id="S60902">
    <property type="entry name" value="S60902"/>
</dbReference>
<dbReference type="SMR" id="Q48230"/>
<dbReference type="BRENDA" id="1.1.1.405">
    <property type="organism ID" value="2529"/>
</dbReference>
<dbReference type="SABIO-RK" id="Q48230"/>
<dbReference type="UniPathway" id="UPA00934"/>
<dbReference type="GO" id="GO:0050518">
    <property type="term" value="F:2-C-methyl-D-erythritol 4-phosphate cytidylyltransferase activity"/>
    <property type="evidence" value="ECO:0007669"/>
    <property type="project" value="UniProtKB-UniRule"/>
</dbReference>
<dbReference type="GO" id="GO:0047349">
    <property type="term" value="F:D-ribitol-5-phosphate cytidylyltransferase activity"/>
    <property type="evidence" value="ECO:0007669"/>
    <property type="project" value="UniProtKB-EC"/>
</dbReference>
<dbReference type="GO" id="GO:0050256">
    <property type="term" value="F:ribitol-5-phosphate 2-dehydrogenase [(NAD(P)+] activity"/>
    <property type="evidence" value="ECO:0007669"/>
    <property type="project" value="RHEA"/>
</dbReference>
<dbReference type="GO" id="GO:0045227">
    <property type="term" value="P:capsule polysaccharide biosynthetic process"/>
    <property type="evidence" value="ECO:0007669"/>
    <property type="project" value="UniProtKB-UniPathway"/>
</dbReference>
<dbReference type="GO" id="GO:0019288">
    <property type="term" value="P:isopentenyl diphosphate biosynthetic process, methylerythritol 4-phosphate pathway"/>
    <property type="evidence" value="ECO:0007669"/>
    <property type="project" value="UniProtKB-UniRule"/>
</dbReference>
<dbReference type="CDD" id="cd02516">
    <property type="entry name" value="CDP-ME_synthetase"/>
    <property type="match status" value="1"/>
</dbReference>
<dbReference type="CDD" id="cd05233">
    <property type="entry name" value="SDR_c"/>
    <property type="match status" value="1"/>
</dbReference>
<dbReference type="FunFam" id="3.90.550.10:FF:000003">
    <property type="entry name" value="2-C-methyl-D-erythritol 4-phosphate cytidylyltransferase"/>
    <property type="match status" value="1"/>
</dbReference>
<dbReference type="Gene3D" id="3.40.50.720">
    <property type="entry name" value="NAD(P)-binding Rossmann-like Domain"/>
    <property type="match status" value="1"/>
</dbReference>
<dbReference type="Gene3D" id="3.90.550.10">
    <property type="entry name" value="Spore Coat Polysaccharide Biosynthesis Protein SpsA, Chain A"/>
    <property type="match status" value="1"/>
</dbReference>
<dbReference type="HAMAP" id="MF_00108">
    <property type="entry name" value="IspD"/>
    <property type="match status" value="1"/>
</dbReference>
<dbReference type="InterPro" id="IPR012115">
    <property type="entry name" value="CDP-ribitol_syn"/>
</dbReference>
<dbReference type="InterPro" id="IPR001228">
    <property type="entry name" value="IspD"/>
</dbReference>
<dbReference type="InterPro" id="IPR034683">
    <property type="entry name" value="IspD/TarI"/>
</dbReference>
<dbReference type="InterPro" id="IPR050088">
    <property type="entry name" value="IspD/TarI_cytidylyltransf_bact"/>
</dbReference>
<dbReference type="InterPro" id="IPR036291">
    <property type="entry name" value="NAD(P)-bd_dom_sf"/>
</dbReference>
<dbReference type="InterPro" id="IPR029044">
    <property type="entry name" value="Nucleotide-diphossugar_trans"/>
</dbReference>
<dbReference type="InterPro" id="IPR020904">
    <property type="entry name" value="Sc_DH/Rdtase_CS"/>
</dbReference>
<dbReference type="InterPro" id="IPR002347">
    <property type="entry name" value="SDR_fam"/>
</dbReference>
<dbReference type="NCBIfam" id="NF001183">
    <property type="entry name" value="PRK00155.1-3"/>
    <property type="match status" value="1"/>
</dbReference>
<dbReference type="PANTHER" id="PTHR32125">
    <property type="entry name" value="2-C-METHYL-D-ERYTHRITOL 4-PHOSPHATE CYTIDYLYLTRANSFERASE, CHLOROPLASTIC"/>
    <property type="match status" value="1"/>
</dbReference>
<dbReference type="PANTHER" id="PTHR32125:SF4">
    <property type="entry name" value="2-C-METHYL-D-ERYTHRITOL 4-PHOSPHATE CYTIDYLYLTRANSFERASE, CHLOROPLASTIC"/>
    <property type="match status" value="1"/>
</dbReference>
<dbReference type="Pfam" id="PF13561">
    <property type="entry name" value="adh_short_C2"/>
    <property type="match status" value="1"/>
</dbReference>
<dbReference type="Pfam" id="PF01128">
    <property type="entry name" value="IspD"/>
    <property type="match status" value="1"/>
</dbReference>
<dbReference type="PIRSF" id="PIRSF036586">
    <property type="entry name" value="CDP-ribitol_syn"/>
    <property type="match status" value="1"/>
</dbReference>
<dbReference type="PRINTS" id="PR00081">
    <property type="entry name" value="GDHRDH"/>
</dbReference>
<dbReference type="SUPFAM" id="SSF51735">
    <property type="entry name" value="NAD(P)-binding Rossmann-fold domains"/>
    <property type="match status" value="1"/>
</dbReference>
<dbReference type="SUPFAM" id="SSF53448">
    <property type="entry name" value="Nucleotide-diphospho-sugar transferases"/>
    <property type="match status" value="1"/>
</dbReference>
<dbReference type="PROSITE" id="PS00061">
    <property type="entry name" value="ADH_SHORT"/>
    <property type="match status" value="1"/>
</dbReference>
<feature type="chain" id="PRO_0000437506" description="Bifunctional ribulose 5-phosphate reductase/CDP-ribitol pyrophosphorylase Bcs1">
    <location>
        <begin position="1"/>
        <end position="474"/>
    </location>
</feature>
<feature type="region of interest" description="Ribitol-5-phosphate cytidylyltransferase">
    <location>
        <begin position="1"/>
        <end position="238"/>
    </location>
</feature>
<feature type="region of interest" description="Ribulose-5-phosphate reductase">
    <location>
        <begin position="250"/>
        <end position="474"/>
    </location>
</feature>
<feature type="mutagenesis site" description="Has 100-fold reduction of catalytic efficiency for the cytidylyltransferase activity." evidence="1">
    <original>R</original>
    <variation>A</variation>
    <location>
        <position position="18"/>
    </location>
</feature>
<feature type="mutagenesis site" description="Has 70-fold reduction of catalytic efficiency for the reductase activity." evidence="1">
    <original>K</original>
    <variation>A</variation>
    <location>
        <position position="386"/>
    </location>
</feature>
<reference key="1">
    <citation type="journal article" date="1995" name="Mol. Microbiol.">
        <title>Region II of Haemophilus influenzae type b capsulation locus is involved in serotype-specific polysaccharide synthesis.</title>
        <authorList>
            <person name="van Eldere J."/>
            <person name="Brophy L."/>
            <person name="Loynds B."/>
            <person name="Celis P."/>
            <person name="Kroll J.S."/>
            <person name="Moxon E.R."/>
            <person name="Hancock I."/>
            <person name="Carman S."/>
        </authorList>
    </citation>
    <scope>NUCLEOTIDE SEQUENCE [GENOMIC DNA]</scope>
    <source>
        <strain evidence="7">RM135</strain>
    </source>
</reference>
<reference key="2">
    <citation type="journal article" date="2003" name="Infect. Immun.">
        <title>Complete sequence of the cap locus of Haemophilus influenzae serotype b and nonencapsulated b capsule-negative variants.</title>
        <authorList>
            <person name="Satola S.W."/>
            <person name="Schirmer P.L."/>
            <person name="Farley M.M."/>
        </authorList>
    </citation>
    <scope>NUCLEOTIDE SEQUENCE [GENOMIC DNA]</scope>
    <source>
        <strain evidence="6">373 / Serotype B</strain>
        <strain evidence="5">GA834 / Serotype B</strain>
    </source>
</reference>
<reference key="3">
    <citation type="journal article" date="2001" name="Biochemistry">
        <title>Reduction precedes cytidylyl transfer without substrate channeling in distinct active sites of the bifunctional CDP-ribitol synthase from Haemophilus influenzae.</title>
        <authorList>
            <person name="Zolli M."/>
            <person name="Kobric D.J."/>
            <person name="Brown E.D."/>
        </authorList>
    </citation>
    <scope>FUNCTION</scope>
    <scope>CATALYTIC ACTIVITY</scope>
    <scope>SUBSTRATE SPECIFICITY</scope>
    <scope>BIOPHYSICOCHEMICAL PROPERTIES</scope>
    <scope>SUBUNIT</scope>
    <scope>MUTAGENESIS OF ARG-18 AND LYS-386</scope>
</reference>
<reference key="4">
    <citation type="journal article" date="2004" name="Biochemistry">
        <title>Bifunctional catalysis by CDP-ribitol synthase: convergent recruitment of reductase and cytidylyltransferase activities in Haemophilus influenzae and Staphylococcus aureus.</title>
        <authorList>
            <person name="Pereira M.P."/>
            <person name="Brown E.D."/>
        </authorList>
    </citation>
    <scope>FUNCTION</scope>
    <scope>CATALYTIC ACTIVITY</scope>
    <scope>SUBUNIT</scope>
    <scope>BIOPHYSICOCHEMICAL PROPERTIES</scope>
    <scope>ENZYME KINETICS</scope>
</reference>
<protein>
    <recommendedName>
        <fullName evidence="4">Bifunctional ribulose 5-phosphate reductase/CDP-ribitol pyrophosphorylase Bcs1</fullName>
    </recommendedName>
    <alternativeName>
        <fullName evidence="3">CDP-ribitol synthase</fullName>
    </alternativeName>
    <domain>
        <recommendedName>
            <fullName evidence="3">Ribitol-5-phosphate cytidylyltransferase</fullName>
            <ecNumber evidence="1 2">2.7.7.40</ecNumber>
        </recommendedName>
    </domain>
    <domain>
        <recommendedName>
            <fullName evidence="3">Ribulose-5-phosphate reductase</fullName>
            <shortName evidence="4">Ribulose-5-P reductase</shortName>
            <ecNumber evidence="1 2">1.1.1.405</ecNumber>
        </recommendedName>
        <alternativeName>
            <fullName evidence="4">Ribitol-5-phosphate dehydrogenase</fullName>
        </alternativeName>
    </domain>
</protein>